<comment type="function">
    <text evidence="2">Has low D-gluconate dehydratase activity (in vitro), suggesting that it has no significant role in D-gluconate degradation in vivo. Has no detectable activity with a panel of 70 other acid sugars (in vitro).</text>
</comment>
<comment type="catalytic activity">
    <reaction evidence="2">
        <text>D-gluconate = 2-dehydro-3-deoxy-D-gluconate + H2O</text>
        <dbReference type="Rhea" id="RHEA:21612"/>
        <dbReference type="ChEBI" id="CHEBI:15377"/>
        <dbReference type="ChEBI" id="CHEBI:18391"/>
        <dbReference type="ChEBI" id="CHEBI:57990"/>
        <dbReference type="EC" id="4.2.1.39"/>
    </reaction>
</comment>
<comment type="cofactor">
    <cofactor evidence="2">
        <name>Mg(2+)</name>
        <dbReference type="ChEBI" id="CHEBI:18420"/>
    </cofactor>
    <text evidence="2">Binds 1 Mg(2+) ion per subunit.</text>
</comment>
<comment type="biophysicochemical properties">
    <kinetics>
        <text evidence="2">kcat is 0.02 sec(-1) with D-gluconate.</text>
    </kinetics>
</comment>
<comment type="similarity">
    <text evidence="3">Belongs to the mandelate racemase/muconate lactonizing enzyme family. GalD subfamily.</text>
</comment>
<reference key="1">
    <citation type="journal article" date="2011" name="J. Bacteriol.">
        <title>Comparative genomics of 28 Salmonella enterica isolates: evidence for CRISPR-mediated adaptive sublineage evolution.</title>
        <authorList>
            <person name="Fricke W.F."/>
            <person name="Mammel M.K."/>
            <person name="McDermott P.F."/>
            <person name="Tartera C."/>
            <person name="White D.G."/>
            <person name="Leclerc J.E."/>
            <person name="Ravel J."/>
            <person name="Cebula T.A."/>
        </authorList>
    </citation>
    <scope>NUCLEOTIDE SEQUENCE [LARGE SCALE GENOMIC DNA]</scope>
    <source>
        <strain>SL491</strain>
    </source>
</reference>
<reference key="2">
    <citation type="journal article" date="2014" name="Biochemistry">
        <title>Discovery of function in the enolase superfamily: D-mannonate and D-gluconate dehydratases in the D-mannonate dehydratase subgroup.</title>
        <authorList>
            <person name="Wichelecki D.J."/>
            <person name="Balthazor B.M."/>
            <person name="Chau A.C."/>
            <person name="Vetting M.W."/>
            <person name="Fedorov A.A."/>
            <person name="Fedorov E.V."/>
            <person name="Lukk T."/>
            <person name="Patskovsky Y.V."/>
            <person name="Stead M.B."/>
            <person name="Hillerich B.S."/>
            <person name="Seidel R.D."/>
            <person name="Almo S.C."/>
            <person name="Gerlt J.A."/>
        </authorList>
    </citation>
    <scope>FUNCTION</scope>
    <scope>CATALYTIC ACTIVITY</scope>
    <scope>COFACTOR</scope>
    <scope>BIOPHYSICOCHEMICAL PROPERTIES</scope>
    <source>
        <strain>SL491</strain>
    </source>
</reference>
<dbReference type="EC" id="4.2.1.-"/>
<dbReference type="EC" id="4.2.1.39"/>
<dbReference type="EMBL" id="ABFH02000002">
    <property type="protein sequence ID" value="EDZ00842.1"/>
    <property type="molecule type" value="Genomic_DNA"/>
</dbReference>
<dbReference type="RefSeq" id="WP_000067285.1">
    <property type="nucleotide sequence ID" value="NZ_ABFH02000002.1"/>
</dbReference>
<dbReference type="SMR" id="B5QBD4"/>
<dbReference type="Proteomes" id="UP000003614">
    <property type="component" value="Unassembled WGS sequence"/>
</dbReference>
<dbReference type="GO" id="GO:0047929">
    <property type="term" value="F:gluconate dehydratase activity"/>
    <property type="evidence" value="ECO:0000314"/>
    <property type="project" value="UniProtKB"/>
</dbReference>
<dbReference type="GO" id="GO:0000287">
    <property type="term" value="F:magnesium ion binding"/>
    <property type="evidence" value="ECO:0000314"/>
    <property type="project" value="UniProtKB"/>
</dbReference>
<dbReference type="GO" id="GO:0009063">
    <property type="term" value="P:amino acid catabolic process"/>
    <property type="evidence" value="ECO:0007669"/>
    <property type="project" value="InterPro"/>
</dbReference>
<dbReference type="GO" id="GO:0016052">
    <property type="term" value="P:carbohydrate catabolic process"/>
    <property type="evidence" value="ECO:0000314"/>
    <property type="project" value="UniProtKB"/>
</dbReference>
<dbReference type="FunFam" id="3.20.20.120:FF:000011">
    <property type="entry name" value="D-galactonate dehydratase family member VSWAT3_13707"/>
    <property type="match status" value="1"/>
</dbReference>
<dbReference type="Gene3D" id="3.20.20.120">
    <property type="entry name" value="Enolase-like C-terminal domain"/>
    <property type="match status" value="1"/>
</dbReference>
<dbReference type="Gene3D" id="3.30.390.10">
    <property type="entry name" value="Enolase-like, N-terminal domain"/>
    <property type="match status" value="1"/>
</dbReference>
<dbReference type="InterPro" id="IPR034593">
    <property type="entry name" value="DgoD-like"/>
</dbReference>
<dbReference type="InterPro" id="IPR036849">
    <property type="entry name" value="Enolase-like_C_sf"/>
</dbReference>
<dbReference type="InterPro" id="IPR029017">
    <property type="entry name" value="Enolase-like_N"/>
</dbReference>
<dbReference type="InterPro" id="IPR029065">
    <property type="entry name" value="Enolase_C-like"/>
</dbReference>
<dbReference type="InterPro" id="IPR018110">
    <property type="entry name" value="Mandel_Rmase/mucon_lact_enz_CS"/>
</dbReference>
<dbReference type="InterPro" id="IPR013342">
    <property type="entry name" value="Mandelate_racemase_C"/>
</dbReference>
<dbReference type="InterPro" id="IPR013341">
    <property type="entry name" value="Mandelate_racemase_N_dom"/>
</dbReference>
<dbReference type="PANTHER" id="PTHR48080">
    <property type="entry name" value="D-GALACTONATE DEHYDRATASE-RELATED"/>
    <property type="match status" value="1"/>
</dbReference>
<dbReference type="PANTHER" id="PTHR48080:SF6">
    <property type="entry name" value="STARVATION-SENSING PROTEIN RSPA"/>
    <property type="match status" value="1"/>
</dbReference>
<dbReference type="Pfam" id="PF13378">
    <property type="entry name" value="MR_MLE_C"/>
    <property type="match status" value="1"/>
</dbReference>
<dbReference type="Pfam" id="PF02746">
    <property type="entry name" value="MR_MLE_N"/>
    <property type="match status" value="1"/>
</dbReference>
<dbReference type="SMART" id="SM00922">
    <property type="entry name" value="MR_MLE"/>
    <property type="match status" value="1"/>
</dbReference>
<dbReference type="SUPFAM" id="SSF51604">
    <property type="entry name" value="Enolase C-terminal domain-like"/>
    <property type="match status" value="1"/>
</dbReference>
<dbReference type="SUPFAM" id="SSF54826">
    <property type="entry name" value="Enolase N-terminal domain-like"/>
    <property type="match status" value="1"/>
</dbReference>
<dbReference type="PROSITE" id="PS00908">
    <property type="entry name" value="MR_MLE_1"/>
    <property type="match status" value="1"/>
</dbReference>
<dbReference type="PROSITE" id="PS00909">
    <property type="entry name" value="MR_MLE_2"/>
    <property type="match status" value="1"/>
</dbReference>
<evidence type="ECO:0000250" key="1"/>
<evidence type="ECO:0000269" key="2">
    <source>
    </source>
</evidence>
<evidence type="ECO:0000305" key="3"/>
<proteinExistence type="evidence at protein level"/>
<accession>B5QBD4</accession>
<organism>
    <name type="scientific">Salmonella virchow (strain SL491)</name>
    <dbReference type="NCBI Taxonomy" id="465517"/>
    <lineage>
        <taxon>Bacteria</taxon>
        <taxon>Pseudomonadati</taxon>
        <taxon>Pseudomonadota</taxon>
        <taxon>Gammaproteobacteria</taxon>
        <taxon>Enterobacterales</taxon>
        <taxon>Enterobacteriaceae</taxon>
        <taxon>Salmonella</taxon>
    </lineage>
</organism>
<protein>
    <recommendedName>
        <fullName>D-galactonate dehydratase family member SeV_A0456</fullName>
        <ecNumber>4.2.1.-</ecNumber>
    </recommendedName>
    <alternativeName>
        <fullName>D-gluconate dehydratase</fullName>
        <ecNumber>4.2.1.39</ecNumber>
    </alternativeName>
</protein>
<keyword id="KW-0456">Lyase</keyword>
<keyword id="KW-0460">Magnesium</keyword>
<keyword id="KW-0479">Metal-binding</keyword>
<name>DGD_SALV4</name>
<feature type="chain" id="PRO_0000429899" description="D-galactonate dehydratase family member SeV_A0456">
    <location>
        <begin position="1"/>
        <end position="417"/>
    </location>
</feature>
<feature type="active site" description="Proton donor/acceptor" evidence="1">
    <location>
        <position position="158"/>
    </location>
</feature>
<feature type="active site" description="Proton donor/acceptor" evidence="1">
    <location>
        <position position="225"/>
    </location>
</feature>
<feature type="binding site" evidence="1">
    <location>
        <position position="43"/>
    </location>
    <ligand>
        <name>substrate</name>
    </ligand>
</feature>
<feature type="binding site" evidence="1">
    <location>
        <position position="127"/>
    </location>
    <ligand>
        <name>substrate</name>
    </ligand>
</feature>
<feature type="binding site" evidence="1">
    <location>
        <position position="223"/>
    </location>
    <ligand>
        <name>Mg(2+)</name>
        <dbReference type="ChEBI" id="CHEBI:18420"/>
    </ligand>
</feature>
<feature type="binding site" evidence="1">
    <location>
        <position position="249"/>
    </location>
    <ligand>
        <name>Mg(2+)</name>
        <dbReference type="ChEBI" id="CHEBI:18420"/>
    </ligand>
</feature>
<feature type="binding site" evidence="1">
    <location>
        <position position="275"/>
    </location>
    <ligand>
        <name>Mg(2+)</name>
        <dbReference type="ChEBI" id="CHEBI:18420"/>
    </ligand>
</feature>
<feature type="binding site" evidence="1">
    <location>
        <position position="275"/>
    </location>
    <ligand>
        <name>substrate</name>
    </ligand>
</feature>
<feature type="binding site" evidence="1">
    <location>
        <position position="296"/>
    </location>
    <ligand>
        <name>substrate</name>
    </ligand>
</feature>
<feature type="binding site" evidence="1">
    <location>
        <position position="325"/>
    </location>
    <ligand>
        <name>substrate</name>
    </ligand>
</feature>
<feature type="binding site" evidence="1">
    <location>
        <position position="329"/>
    </location>
    <ligand>
        <name>substrate</name>
    </ligand>
</feature>
<feature type="binding site" evidence="1">
    <location>
        <position position="352"/>
    </location>
    <ligand>
        <name>substrate</name>
    </ligand>
</feature>
<feature type="site" description="Important for activity and substrate specificity; Pro is observed in family members with low D-mannonate dehydratase activity" evidence="1">
    <location>
        <position position="327"/>
    </location>
</feature>
<gene>
    <name type="ORF">SeV_A0456</name>
</gene>
<sequence length="417" mass="46047">MSNLKITNVKTILTAPGGIDLAVVKIETNEPGLYGLGCATFTQRIFAVKSAIDEYMAPFLVGKDPTRIEDIWQSGVVSGYWRNGPIMNNALSGVDMALWDIKGKLAGMPVYDLLGGKCRDGIPLYCHTDGGDEVEVEDNIRARMEEGYQYVRCQMGMYGGAGTDDLKLIATQLARAKNIQPKRSPRSKTPGIYFDPDAYAKSVPRLFDHLRNKLGFGIEFIHDVHERVTPVTAINLAKTLEQYQLFYLEDPVAPENIDWLKMLRQQSSTPISMGELFVNVNEWKPLIDNRLIDYIRCHVSTIGGITPAKKLAVYSELNGVRTAWHGPGDISPVGVCANMHLDLSSPNFGIQEYTPMNDALRDVFPGCPEIDHGYAYLNDKPGLGIDIDEAKAAKYPCEGGIPSWTMARTPDGTASRP</sequence>